<sequence>MATLKEKLIASVADDEAAVPNNKITVVGVGQVGMACAISILGKSLADELALVDVLEDKLKGEMMDLQHGSLFLQTPKIVADKDYSVTANSKIVVVTAGVRQQEGESRLNLVQRNVNVFKFIIPQIVKYSPDCTIIVVSNPVDILTYVTWKLSGLPKHRVIGSGCNLDSARFRYLMAEKLGIHPSSCHGWILGEHGDSSVAVWSGVNVAGVSLQELNPEMGTDNDSENWKEVHKMVVDSAYEVIKLKGYTNWAIGLSVADLIESMLKNLSRIHPVSTMVKGMYGIENEVFLSLPCILNARGLTSVINQKLKDDEVAQLRKSADTLWDIQKDLKDL</sequence>
<gene>
    <name type="primary">Ldhb</name>
    <name type="synonym">Ldh-2</name>
    <name type="synonym">Ldh2</name>
</gene>
<proteinExistence type="evidence at protein level"/>
<feature type="initiator methionine" description="Removed" evidence="2">
    <location>
        <position position="1"/>
    </location>
</feature>
<feature type="chain" id="PRO_0000168461" description="L-lactate dehydrogenase B chain">
    <location>
        <begin position="2"/>
        <end position="334"/>
    </location>
</feature>
<feature type="active site" description="Proton acceptor" evidence="1">
    <location>
        <position position="194"/>
    </location>
</feature>
<feature type="binding site" evidence="1">
    <location>
        <begin position="30"/>
        <end position="58"/>
    </location>
    <ligand>
        <name>NAD(+)</name>
        <dbReference type="ChEBI" id="CHEBI:57540"/>
    </ligand>
</feature>
<feature type="binding site" evidence="1">
    <location>
        <position position="100"/>
    </location>
    <ligand>
        <name>NAD(+)</name>
        <dbReference type="ChEBI" id="CHEBI:57540"/>
    </ligand>
</feature>
<feature type="binding site" evidence="1">
    <location>
        <position position="107"/>
    </location>
    <ligand>
        <name>substrate</name>
    </ligand>
</feature>
<feature type="binding site" evidence="1">
    <location>
        <position position="139"/>
    </location>
    <ligand>
        <name>NAD(+)</name>
        <dbReference type="ChEBI" id="CHEBI:57540"/>
    </ligand>
</feature>
<feature type="binding site" evidence="1">
    <location>
        <position position="139"/>
    </location>
    <ligand>
        <name>substrate</name>
    </ligand>
</feature>
<feature type="binding site" evidence="1">
    <location>
        <position position="170"/>
    </location>
    <ligand>
        <name>substrate</name>
    </ligand>
</feature>
<feature type="binding site" evidence="1">
    <location>
        <position position="249"/>
    </location>
    <ligand>
        <name>substrate</name>
    </ligand>
</feature>
<feature type="modified residue" description="N-acetylalanine" evidence="2">
    <location>
        <position position="2"/>
    </location>
</feature>
<feature type="modified residue" description="N6-acetyllysine" evidence="2">
    <location>
        <position position="7"/>
    </location>
</feature>
<feature type="modified residue" description="Phosphoserine" evidence="5">
    <location>
        <position position="11"/>
    </location>
</feature>
<feature type="modified residue" description="Phosphoserine" evidence="5">
    <location>
        <position position="44"/>
    </location>
</feature>
<feature type="modified residue" description="N6-acetyllysine" evidence="2">
    <location>
        <position position="58"/>
    </location>
</feature>
<feature type="modified residue" description="N6-acetyllysine" evidence="2">
    <location>
        <position position="119"/>
    </location>
</feature>
<feature type="modified residue" description="Phosphotyrosine" evidence="4">
    <location>
        <position position="240"/>
    </location>
</feature>
<feature type="modified residue" description="N6-acetyllysine" evidence="2">
    <location>
        <position position="329"/>
    </location>
</feature>
<evidence type="ECO:0000250" key="1"/>
<evidence type="ECO:0000250" key="2">
    <source>
        <dbReference type="UniProtKB" id="P07195"/>
    </source>
</evidence>
<evidence type="ECO:0000305" key="3"/>
<evidence type="ECO:0007744" key="4">
    <source>
    </source>
</evidence>
<evidence type="ECO:0007744" key="5">
    <source>
    </source>
</evidence>
<dbReference type="EC" id="1.1.1.27" evidence="2"/>
<dbReference type="EMBL" id="X51905">
    <property type="protein sequence ID" value="CAA36185.1"/>
    <property type="molecule type" value="mRNA"/>
</dbReference>
<dbReference type="EMBL" id="AK002257">
    <property type="protein sequence ID" value="BAB21970.1"/>
    <property type="molecule type" value="mRNA"/>
</dbReference>
<dbReference type="EMBL" id="AK019391">
    <property type="protein sequence ID" value="BAB31697.1"/>
    <property type="molecule type" value="mRNA"/>
</dbReference>
<dbReference type="EMBL" id="AK131637">
    <property type="protein sequence ID" value="BAE20732.1"/>
    <property type="molecule type" value="mRNA"/>
</dbReference>
<dbReference type="EMBL" id="BC046755">
    <property type="protein sequence ID" value="AAH46755.1"/>
    <property type="molecule type" value="mRNA"/>
</dbReference>
<dbReference type="CCDS" id="CCDS20684.1"/>
<dbReference type="PIR" id="S09954">
    <property type="entry name" value="S09954"/>
</dbReference>
<dbReference type="RefSeq" id="NP_001289694.1">
    <property type="nucleotide sequence ID" value="NM_001302765.1"/>
</dbReference>
<dbReference type="RefSeq" id="NP_001303251.1">
    <property type="nucleotide sequence ID" value="NM_001316322.1"/>
</dbReference>
<dbReference type="RefSeq" id="NP_032518.1">
    <property type="nucleotide sequence ID" value="NM_008492.3"/>
</dbReference>
<dbReference type="SMR" id="P16125"/>
<dbReference type="BioGRID" id="201130">
    <property type="interactions" value="28"/>
</dbReference>
<dbReference type="FunCoup" id="P16125">
    <property type="interactions" value="942"/>
</dbReference>
<dbReference type="IntAct" id="P16125">
    <property type="interactions" value="9"/>
</dbReference>
<dbReference type="MINT" id="P16125"/>
<dbReference type="STRING" id="10090.ENSMUSP00000032373"/>
<dbReference type="BindingDB" id="P16125"/>
<dbReference type="ChEMBL" id="CHEMBL5169119"/>
<dbReference type="GlyGen" id="P16125">
    <property type="glycosylation" value="1 site, 1 O-linked glycan (1 site)"/>
</dbReference>
<dbReference type="iPTMnet" id="P16125"/>
<dbReference type="PhosphoSitePlus" id="P16125"/>
<dbReference type="SwissPalm" id="P16125"/>
<dbReference type="REPRODUCTION-2DPAGE" id="P16125"/>
<dbReference type="REPRODUCTION-2DPAGE" id="Q545Y4"/>
<dbReference type="CPTAC" id="non-CPTAC-3720"/>
<dbReference type="jPOST" id="P16125"/>
<dbReference type="PaxDb" id="10090-ENSMUSP00000032373"/>
<dbReference type="PeptideAtlas" id="P16125"/>
<dbReference type="ProteomicsDB" id="292248"/>
<dbReference type="Pumba" id="P16125"/>
<dbReference type="TopDownProteomics" id="P16125"/>
<dbReference type="DNASU" id="16832"/>
<dbReference type="Ensembl" id="ENSMUST00000032373.12">
    <property type="protein sequence ID" value="ENSMUSP00000032373.6"/>
    <property type="gene ID" value="ENSMUSG00000030246.13"/>
</dbReference>
<dbReference type="Ensembl" id="ENSMUST00000239397.2">
    <property type="protein sequence ID" value="ENSMUSP00000159362.2"/>
    <property type="gene ID" value="ENSMUSG00000030246.13"/>
</dbReference>
<dbReference type="GeneID" id="16832"/>
<dbReference type="KEGG" id="mmu:16832"/>
<dbReference type="UCSC" id="uc009epj.2">
    <property type="organism name" value="mouse"/>
</dbReference>
<dbReference type="AGR" id="MGI:96763"/>
<dbReference type="CTD" id="3945"/>
<dbReference type="MGI" id="MGI:96763">
    <property type="gene designation" value="Ldhb"/>
</dbReference>
<dbReference type="VEuPathDB" id="HostDB:ENSMUSG00000030246"/>
<dbReference type="eggNOG" id="KOG1495">
    <property type="taxonomic scope" value="Eukaryota"/>
</dbReference>
<dbReference type="GeneTree" id="ENSGT00940000153525"/>
<dbReference type="HOGENOM" id="CLU_045401_0_2_1"/>
<dbReference type="InParanoid" id="P16125"/>
<dbReference type="OMA" id="THLDSMR"/>
<dbReference type="OrthoDB" id="5405561at2759"/>
<dbReference type="PhylomeDB" id="P16125"/>
<dbReference type="TreeFam" id="TF314963"/>
<dbReference type="Reactome" id="R-MMU-70268">
    <property type="pathway name" value="Pyruvate metabolism"/>
</dbReference>
<dbReference type="UniPathway" id="UPA00554">
    <property type="reaction ID" value="UER00611"/>
</dbReference>
<dbReference type="BioGRID-ORCS" id="16832">
    <property type="hits" value="4 hits in 77 CRISPR screens"/>
</dbReference>
<dbReference type="CD-CODE" id="CE726F99">
    <property type="entry name" value="Postsynaptic density"/>
</dbReference>
<dbReference type="ChiTaRS" id="Ldhb">
    <property type="organism name" value="mouse"/>
</dbReference>
<dbReference type="PRO" id="PR:P16125"/>
<dbReference type="Proteomes" id="UP000000589">
    <property type="component" value="Chromosome 6"/>
</dbReference>
<dbReference type="RNAct" id="P16125">
    <property type="molecule type" value="protein"/>
</dbReference>
<dbReference type="Bgee" id="ENSMUSG00000030246">
    <property type="expression patterns" value="Expressed in primary oocyte and 247 other cell types or tissues"/>
</dbReference>
<dbReference type="ExpressionAtlas" id="P16125">
    <property type="expression patterns" value="baseline and differential"/>
</dbReference>
<dbReference type="GO" id="GO:0005829">
    <property type="term" value="C:cytosol"/>
    <property type="evidence" value="ECO:0000314"/>
    <property type="project" value="MGI"/>
</dbReference>
<dbReference type="GO" id="GO:0045121">
    <property type="term" value="C:membrane raft"/>
    <property type="evidence" value="ECO:0007669"/>
    <property type="project" value="Ensembl"/>
</dbReference>
<dbReference type="GO" id="GO:0005743">
    <property type="term" value="C:mitochondrial inner membrane"/>
    <property type="evidence" value="ECO:0000250"/>
    <property type="project" value="UniProtKB"/>
</dbReference>
<dbReference type="GO" id="GO:0005739">
    <property type="term" value="C:mitochondrion"/>
    <property type="evidence" value="ECO:0007005"/>
    <property type="project" value="MGI"/>
</dbReference>
<dbReference type="GO" id="GO:0043209">
    <property type="term" value="C:myelin sheath"/>
    <property type="evidence" value="ECO:0007005"/>
    <property type="project" value="UniProtKB"/>
</dbReference>
<dbReference type="GO" id="GO:1990204">
    <property type="term" value="C:oxidoreductase complex"/>
    <property type="evidence" value="ECO:0007669"/>
    <property type="project" value="Ensembl"/>
</dbReference>
<dbReference type="GO" id="GO:0042802">
    <property type="term" value="F:identical protein binding"/>
    <property type="evidence" value="ECO:0007669"/>
    <property type="project" value="Ensembl"/>
</dbReference>
<dbReference type="GO" id="GO:0019900">
    <property type="term" value="F:kinase binding"/>
    <property type="evidence" value="ECO:0007669"/>
    <property type="project" value="Ensembl"/>
</dbReference>
<dbReference type="GO" id="GO:0004459">
    <property type="term" value="F:L-lactate dehydrogenase activity"/>
    <property type="evidence" value="ECO:0000314"/>
    <property type="project" value="MGI"/>
</dbReference>
<dbReference type="GO" id="GO:0051287">
    <property type="term" value="F:NAD binding"/>
    <property type="evidence" value="ECO:0007669"/>
    <property type="project" value="Ensembl"/>
</dbReference>
<dbReference type="GO" id="GO:0019244">
    <property type="term" value="P:lactate biosynthetic process from pyruvate"/>
    <property type="evidence" value="ECO:0000305"/>
    <property type="project" value="MGI"/>
</dbReference>
<dbReference type="GO" id="GO:0019674">
    <property type="term" value="P:NAD metabolic process"/>
    <property type="evidence" value="ECO:0007669"/>
    <property type="project" value="Ensembl"/>
</dbReference>
<dbReference type="CDD" id="cd05293">
    <property type="entry name" value="LDH_1"/>
    <property type="match status" value="1"/>
</dbReference>
<dbReference type="FunFam" id="3.40.50.720:FF:000029">
    <property type="entry name" value="L-lactate dehydrogenase A chain"/>
    <property type="match status" value="1"/>
</dbReference>
<dbReference type="FunFam" id="3.90.110.10:FF:000003">
    <property type="entry name" value="L-lactate dehydrogenase A chain"/>
    <property type="match status" value="1"/>
</dbReference>
<dbReference type="Gene3D" id="3.90.110.10">
    <property type="entry name" value="Lactate dehydrogenase/glycoside hydrolase, family 4, C-terminal"/>
    <property type="match status" value="1"/>
</dbReference>
<dbReference type="Gene3D" id="3.40.50.720">
    <property type="entry name" value="NAD(P)-binding Rossmann-like Domain"/>
    <property type="match status" value="1"/>
</dbReference>
<dbReference type="HAMAP" id="MF_00488">
    <property type="entry name" value="Lactate_dehydrog"/>
    <property type="match status" value="1"/>
</dbReference>
<dbReference type="InterPro" id="IPR001557">
    <property type="entry name" value="L-lactate/malate_DH"/>
</dbReference>
<dbReference type="InterPro" id="IPR011304">
    <property type="entry name" value="L-lactate_DH"/>
</dbReference>
<dbReference type="InterPro" id="IPR018177">
    <property type="entry name" value="L-lactate_DH_AS"/>
</dbReference>
<dbReference type="InterPro" id="IPR022383">
    <property type="entry name" value="Lactate/malate_DH_C"/>
</dbReference>
<dbReference type="InterPro" id="IPR001236">
    <property type="entry name" value="Lactate/malate_DH_N"/>
</dbReference>
<dbReference type="InterPro" id="IPR015955">
    <property type="entry name" value="Lactate_DH/Glyco_Ohase_4_C"/>
</dbReference>
<dbReference type="InterPro" id="IPR036291">
    <property type="entry name" value="NAD(P)-bd_dom_sf"/>
</dbReference>
<dbReference type="NCBIfam" id="TIGR01771">
    <property type="entry name" value="L-LDH-NAD"/>
    <property type="match status" value="1"/>
</dbReference>
<dbReference type="NCBIfam" id="NF000824">
    <property type="entry name" value="PRK00066.1"/>
    <property type="match status" value="1"/>
</dbReference>
<dbReference type="PANTHER" id="PTHR43128">
    <property type="entry name" value="L-2-HYDROXYCARBOXYLATE DEHYDROGENASE (NAD(P)(+))"/>
    <property type="match status" value="1"/>
</dbReference>
<dbReference type="PANTHER" id="PTHR43128:SF2">
    <property type="entry name" value="L-LACTATE DEHYDROGENASE B CHAIN"/>
    <property type="match status" value="1"/>
</dbReference>
<dbReference type="Pfam" id="PF02866">
    <property type="entry name" value="Ldh_1_C"/>
    <property type="match status" value="1"/>
</dbReference>
<dbReference type="Pfam" id="PF00056">
    <property type="entry name" value="Ldh_1_N"/>
    <property type="match status" value="1"/>
</dbReference>
<dbReference type="PIRSF" id="PIRSF000102">
    <property type="entry name" value="Lac_mal_DH"/>
    <property type="match status" value="1"/>
</dbReference>
<dbReference type="PRINTS" id="PR00086">
    <property type="entry name" value="LLDHDRGNASE"/>
</dbReference>
<dbReference type="SUPFAM" id="SSF56327">
    <property type="entry name" value="LDH C-terminal domain-like"/>
    <property type="match status" value="1"/>
</dbReference>
<dbReference type="SUPFAM" id="SSF51735">
    <property type="entry name" value="NAD(P)-binding Rossmann-fold domains"/>
    <property type="match status" value="1"/>
</dbReference>
<dbReference type="PROSITE" id="PS00064">
    <property type="entry name" value="L_LDH"/>
    <property type="match status" value="1"/>
</dbReference>
<reference key="1">
    <citation type="journal article" date="1990" name="Eur. J. Biochem.">
        <title>The cDNA and protein sequences of mouse lactate dehydrogenase B. Molecular evolution of vertebrate lactate dehydrogenase genes A (muscle), B (heart) and C (testis).</title>
        <authorList>
            <person name="Hiraoka B.Y."/>
            <person name="Sharief F.S."/>
            <person name="Yang Y.W."/>
            <person name="Li W.H."/>
            <person name="Li S.S.-L."/>
        </authorList>
    </citation>
    <scope>NUCLEOTIDE SEQUENCE [MRNA]</scope>
</reference>
<reference key="2">
    <citation type="journal article" date="2005" name="Science">
        <title>The transcriptional landscape of the mammalian genome.</title>
        <authorList>
            <person name="Carninci P."/>
            <person name="Kasukawa T."/>
            <person name="Katayama S."/>
            <person name="Gough J."/>
            <person name="Frith M.C."/>
            <person name="Maeda N."/>
            <person name="Oyama R."/>
            <person name="Ravasi T."/>
            <person name="Lenhard B."/>
            <person name="Wells C."/>
            <person name="Kodzius R."/>
            <person name="Shimokawa K."/>
            <person name="Bajic V.B."/>
            <person name="Brenner S.E."/>
            <person name="Batalov S."/>
            <person name="Forrest A.R."/>
            <person name="Zavolan M."/>
            <person name="Davis M.J."/>
            <person name="Wilming L.G."/>
            <person name="Aidinis V."/>
            <person name="Allen J.E."/>
            <person name="Ambesi-Impiombato A."/>
            <person name="Apweiler R."/>
            <person name="Aturaliya R.N."/>
            <person name="Bailey T.L."/>
            <person name="Bansal M."/>
            <person name="Baxter L."/>
            <person name="Beisel K.W."/>
            <person name="Bersano T."/>
            <person name="Bono H."/>
            <person name="Chalk A.M."/>
            <person name="Chiu K.P."/>
            <person name="Choudhary V."/>
            <person name="Christoffels A."/>
            <person name="Clutterbuck D.R."/>
            <person name="Crowe M.L."/>
            <person name="Dalla E."/>
            <person name="Dalrymple B.P."/>
            <person name="de Bono B."/>
            <person name="Della Gatta G."/>
            <person name="di Bernardo D."/>
            <person name="Down T."/>
            <person name="Engstrom P."/>
            <person name="Fagiolini M."/>
            <person name="Faulkner G."/>
            <person name="Fletcher C.F."/>
            <person name="Fukushima T."/>
            <person name="Furuno M."/>
            <person name="Futaki S."/>
            <person name="Gariboldi M."/>
            <person name="Georgii-Hemming P."/>
            <person name="Gingeras T.R."/>
            <person name="Gojobori T."/>
            <person name="Green R.E."/>
            <person name="Gustincich S."/>
            <person name="Harbers M."/>
            <person name="Hayashi Y."/>
            <person name="Hensch T.K."/>
            <person name="Hirokawa N."/>
            <person name="Hill D."/>
            <person name="Huminiecki L."/>
            <person name="Iacono M."/>
            <person name="Ikeo K."/>
            <person name="Iwama A."/>
            <person name="Ishikawa T."/>
            <person name="Jakt M."/>
            <person name="Kanapin A."/>
            <person name="Katoh M."/>
            <person name="Kawasawa Y."/>
            <person name="Kelso J."/>
            <person name="Kitamura H."/>
            <person name="Kitano H."/>
            <person name="Kollias G."/>
            <person name="Krishnan S.P."/>
            <person name="Kruger A."/>
            <person name="Kummerfeld S.K."/>
            <person name="Kurochkin I.V."/>
            <person name="Lareau L.F."/>
            <person name="Lazarevic D."/>
            <person name="Lipovich L."/>
            <person name="Liu J."/>
            <person name="Liuni S."/>
            <person name="McWilliam S."/>
            <person name="Madan Babu M."/>
            <person name="Madera M."/>
            <person name="Marchionni L."/>
            <person name="Matsuda H."/>
            <person name="Matsuzawa S."/>
            <person name="Miki H."/>
            <person name="Mignone F."/>
            <person name="Miyake S."/>
            <person name="Morris K."/>
            <person name="Mottagui-Tabar S."/>
            <person name="Mulder N."/>
            <person name="Nakano N."/>
            <person name="Nakauchi H."/>
            <person name="Ng P."/>
            <person name="Nilsson R."/>
            <person name="Nishiguchi S."/>
            <person name="Nishikawa S."/>
            <person name="Nori F."/>
            <person name="Ohara O."/>
            <person name="Okazaki Y."/>
            <person name="Orlando V."/>
            <person name="Pang K.C."/>
            <person name="Pavan W.J."/>
            <person name="Pavesi G."/>
            <person name="Pesole G."/>
            <person name="Petrovsky N."/>
            <person name="Piazza S."/>
            <person name="Reed J."/>
            <person name="Reid J.F."/>
            <person name="Ring B.Z."/>
            <person name="Ringwald M."/>
            <person name="Rost B."/>
            <person name="Ruan Y."/>
            <person name="Salzberg S.L."/>
            <person name="Sandelin A."/>
            <person name="Schneider C."/>
            <person name="Schoenbach C."/>
            <person name="Sekiguchi K."/>
            <person name="Semple C.A."/>
            <person name="Seno S."/>
            <person name="Sessa L."/>
            <person name="Sheng Y."/>
            <person name="Shibata Y."/>
            <person name="Shimada H."/>
            <person name="Shimada K."/>
            <person name="Silva D."/>
            <person name="Sinclair B."/>
            <person name="Sperling S."/>
            <person name="Stupka E."/>
            <person name="Sugiura K."/>
            <person name="Sultana R."/>
            <person name="Takenaka Y."/>
            <person name="Taki K."/>
            <person name="Tammoja K."/>
            <person name="Tan S.L."/>
            <person name="Tang S."/>
            <person name="Taylor M.S."/>
            <person name="Tegner J."/>
            <person name="Teichmann S.A."/>
            <person name="Ueda H.R."/>
            <person name="van Nimwegen E."/>
            <person name="Verardo R."/>
            <person name="Wei C.L."/>
            <person name="Yagi K."/>
            <person name="Yamanishi H."/>
            <person name="Zabarovsky E."/>
            <person name="Zhu S."/>
            <person name="Zimmer A."/>
            <person name="Hide W."/>
            <person name="Bult C."/>
            <person name="Grimmond S.M."/>
            <person name="Teasdale R.D."/>
            <person name="Liu E.T."/>
            <person name="Brusic V."/>
            <person name="Quackenbush J."/>
            <person name="Wahlestedt C."/>
            <person name="Mattick J.S."/>
            <person name="Hume D.A."/>
            <person name="Kai C."/>
            <person name="Sasaki D."/>
            <person name="Tomaru Y."/>
            <person name="Fukuda S."/>
            <person name="Kanamori-Katayama M."/>
            <person name="Suzuki M."/>
            <person name="Aoki J."/>
            <person name="Arakawa T."/>
            <person name="Iida J."/>
            <person name="Imamura K."/>
            <person name="Itoh M."/>
            <person name="Kato T."/>
            <person name="Kawaji H."/>
            <person name="Kawagashira N."/>
            <person name="Kawashima T."/>
            <person name="Kojima M."/>
            <person name="Kondo S."/>
            <person name="Konno H."/>
            <person name="Nakano K."/>
            <person name="Ninomiya N."/>
            <person name="Nishio T."/>
            <person name="Okada M."/>
            <person name="Plessy C."/>
            <person name="Shibata K."/>
            <person name="Shiraki T."/>
            <person name="Suzuki S."/>
            <person name="Tagami M."/>
            <person name="Waki K."/>
            <person name="Watahiki A."/>
            <person name="Okamura-Oho Y."/>
            <person name="Suzuki H."/>
            <person name="Kawai J."/>
            <person name="Hayashizaki Y."/>
        </authorList>
    </citation>
    <scope>NUCLEOTIDE SEQUENCE [LARGE SCALE MRNA]</scope>
    <source>
        <strain>C57BL/6J</strain>
        <tissue>Cerebellum</tissue>
        <tissue>Head</tissue>
        <tissue>Kidney</tissue>
    </source>
</reference>
<reference key="3">
    <citation type="journal article" date="2004" name="Genome Res.">
        <title>The status, quality, and expansion of the NIH full-length cDNA project: the Mammalian Gene Collection (MGC).</title>
        <authorList>
            <consortium name="The MGC Project Team"/>
        </authorList>
    </citation>
    <scope>NUCLEOTIDE SEQUENCE [LARGE SCALE MRNA]</scope>
    <source>
        <strain>C57BL/6J</strain>
        <tissue>Brain</tissue>
    </source>
</reference>
<reference key="4">
    <citation type="submission" date="2007-04" db="UniProtKB">
        <authorList>
            <person name="Lubec G."/>
            <person name="Klug S."/>
            <person name="Kang S.U."/>
        </authorList>
    </citation>
    <scope>PROTEIN SEQUENCE OF 24-77; 120-127; 159-170 AND 271-299</scope>
    <scope>IDENTIFICATION BY MASS SPECTROMETRY</scope>
    <source>
        <strain>C57BL/6J</strain>
        <tissue>Brain</tissue>
        <tissue>Hippocampus</tissue>
    </source>
</reference>
<reference key="5">
    <citation type="journal article" date="2008" name="J. Proteome Res.">
        <title>Large-scale identification and evolution indexing of tyrosine phosphorylation sites from murine brain.</title>
        <authorList>
            <person name="Ballif B.A."/>
            <person name="Carey G.R."/>
            <person name="Sunyaev S.R."/>
            <person name="Gygi S.P."/>
        </authorList>
    </citation>
    <scope>PHOSPHORYLATION [LARGE SCALE ANALYSIS] AT TYR-240</scope>
    <scope>IDENTIFICATION BY MASS SPECTROMETRY [LARGE SCALE ANALYSIS]</scope>
    <source>
        <tissue>Brain</tissue>
    </source>
</reference>
<reference key="6">
    <citation type="journal article" date="2010" name="Cell">
        <title>A tissue-specific atlas of mouse protein phosphorylation and expression.</title>
        <authorList>
            <person name="Huttlin E.L."/>
            <person name="Jedrychowski M.P."/>
            <person name="Elias J.E."/>
            <person name="Goswami T."/>
            <person name="Rad R."/>
            <person name="Beausoleil S.A."/>
            <person name="Villen J."/>
            <person name="Haas W."/>
            <person name="Sowa M.E."/>
            <person name="Gygi S.P."/>
        </authorList>
    </citation>
    <scope>PHOSPHORYLATION [LARGE SCALE ANALYSIS] AT SER-11 AND SER-44</scope>
    <scope>IDENTIFICATION BY MASS SPECTROMETRY [LARGE SCALE ANALYSIS]</scope>
    <source>
        <tissue>Brain</tissue>
        <tissue>Brown adipose tissue</tissue>
        <tissue>Heart</tissue>
        <tissue>Kidney</tissue>
        <tissue>Liver</tissue>
        <tissue>Lung</tissue>
        <tissue>Pancreas</tissue>
        <tissue>Spleen</tissue>
        <tissue>Testis</tissue>
    </source>
</reference>
<protein>
    <recommendedName>
        <fullName>L-lactate dehydrogenase B chain</fullName>
        <shortName>LDH-B</shortName>
        <ecNumber evidence="2">1.1.1.27</ecNumber>
    </recommendedName>
    <alternativeName>
        <fullName>LDH heart subunit</fullName>
        <shortName>LDH-H</shortName>
    </alternativeName>
</protein>
<keyword id="KW-0007">Acetylation</keyword>
<keyword id="KW-0963">Cytoplasm</keyword>
<keyword id="KW-0903">Direct protein sequencing</keyword>
<keyword id="KW-0472">Membrane</keyword>
<keyword id="KW-0496">Mitochondrion</keyword>
<keyword id="KW-0999">Mitochondrion inner membrane</keyword>
<keyword id="KW-0520">NAD</keyword>
<keyword id="KW-0560">Oxidoreductase</keyword>
<keyword id="KW-0597">Phosphoprotein</keyword>
<keyword id="KW-1185">Reference proteome</keyword>
<name>LDHB_MOUSE</name>
<accession>P16125</accession>
<accession>Q545Y4</accession>
<organism>
    <name type="scientific">Mus musculus</name>
    <name type="common">Mouse</name>
    <dbReference type="NCBI Taxonomy" id="10090"/>
    <lineage>
        <taxon>Eukaryota</taxon>
        <taxon>Metazoa</taxon>
        <taxon>Chordata</taxon>
        <taxon>Craniata</taxon>
        <taxon>Vertebrata</taxon>
        <taxon>Euteleostomi</taxon>
        <taxon>Mammalia</taxon>
        <taxon>Eutheria</taxon>
        <taxon>Euarchontoglires</taxon>
        <taxon>Glires</taxon>
        <taxon>Rodentia</taxon>
        <taxon>Myomorpha</taxon>
        <taxon>Muroidea</taxon>
        <taxon>Muridae</taxon>
        <taxon>Murinae</taxon>
        <taxon>Mus</taxon>
        <taxon>Mus</taxon>
    </lineage>
</organism>
<comment type="function">
    <text evidence="2">Interconverts simultaneously and stereospecifically pyruvate and lactate with concomitant interconversion of NADH and NAD(+).</text>
</comment>
<comment type="catalytic activity">
    <reaction evidence="2">
        <text>(S)-lactate + NAD(+) = pyruvate + NADH + H(+)</text>
        <dbReference type="Rhea" id="RHEA:23444"/>
        <dbReference type="ChEBI" id="CHEBI:15361"/>
        <dbReference type="ChEBI" id="CHEBI:15378"/>
        <dbReference type="ChEBI" id="CHEBI:16651"/>
        <dbReference type="ChEBI" id="CHEBI:57540"/>
        <dbReference type="ChEBI" id="CHEBI:57945"/>
        <dbReference type="EC" id="1.1.1.27"/>
    </reaction>
    <physiologicalReaction direction="left-to-right" evidence="2">
        <dbReference type="Rhea" id="RHEA:23445"/>
    </physiologicalReaction>
    <physiologicalReaction direction="right-to-left" evidence="2">
        <dbReference type="Rhea" id="RHEA:23446"/>
    </physiologicalReaction>
</comment>
<comment type="pathway">
    <text evidence="2">Fermentation; pyruvate fermentation to lactate; (S)-lactate from pyruvate: step 1/1.</text>
</comment>
<comment type="subunit">
    <text evidence="2">Homotetramer. Interacts with PTEN upstream reading frame protein MP31; the interaction leads to inhibition of mitochondrial lactate dehydrogenase activity, preventing conversion of lactate to pyruvate in mitochondria.</text>
</comment>
<comment type="subcellular location">
    <subcellularLocation>
        <location>Cytoplasm</location>
    </subcellularLocation>
    <subcellularLocation>
        <location evidence="2">Mitochondrion inner membrane</location>
        <topology evidence="3">Peripheral membrane protein</topology>
    </subcellularLocation>
</comment>
<comment type="similarity">
    <text evidence="3">Belongs to the LDH/MDH superfamily. LDH family.</text>
</comment>